<keyword id="KW-0067">ATP-binding</keyword>
<keyword id="KW-0418">Kinase</keyword>
<keyword id="KW-0441">Lipid A biosynthesis</keyword>
<keyword id="KW-0444">Lipid biosynthesis</keyword>
<keyword id="KW-0443">Lipid metabolism</keyword>
<keyword id="KW-0547">Nucleotide-binding</keyword>
<keyword id="KW-0808">Transferase</keyword>
<accession>A9IQ28</accession>
<evidence type="ECO:0000255" key="1">
    <source>
        <dbReference type="HAMAP-Rule" id="MF_00409"/>
    </source>
</evidence>
<evidence type="ECO:0000256" key="2">
    <source>
        <dbReference type="SAM" id="MobiDB-lite"/>
    </source>
</evidence>
<reference key="1">
    <citation type="journal article" date="2008" name="BMC Genomics">
        <title>The missing link: Bordetella petrii is endowed with both the metabolic versatility of environmental bacteria and virulence traits of pathogenic Bordetellae.</title>
        <authorList>
            <person name="Gross R."/>
            <person name="Guzman C.A."/>
            <person name="Sebaihia M."/>
            <person name="Martin dos Santos V.A.P."/>
            <person name="Pieper D.H."/>
            <person name="Koebnik R."/>
            <person name="Lechner M."/>
            <person name="Bartels D."/>
            <person name="Buhrmester J."/>
            <person name="Choudhuri J.V."/>
            <person name="Ebensen T."/>
            <person name="Gaigalat L."/>
            <person name="Herrmann S."/>
            <person name="Khachane A.N."/>
            <person name="Larisch C."/>
            <person name="Link S."/>
            <person name="Linke B."/>
            <person name="Meyer F."/>
            <person name="Mormann S."/>
            <person name="Nakunst D."/>
            <person name="Rueckert C."/>
            <person name="Schneiker-Bekel S."/>
            <person name="Schulze K."/>
            <person name="Voerholter F.-J."/>
            <person name="Yevsa T."/>
            <person name="Engle J.T."/>
            <person name="Goldman W.E."/>
            <person name="Puehler A."/>
            <person name="Goebel U.B."/>
            <person name="Goesmann A."/>
            <person name="Bloecker H."/>
            <person name="Kaiser O."/>
            <person name="Martinez-Arias R."/>
        </authorList>
    </citation>
    <scope>NUCLEOTIDE SEQUENCE [LARGE SCALE GENOMIC DNA]</scope>
    <source>
        <strain>ATCC BAA-461 / DSM 12804 / CCUG 43448</strain>
    </source>
</reference>
<gene>
    <name evidence="1" type="primary">lpxK</name>
    <name type="ordered locus">Bpet2670</name>
</gene>
<proteinExistence type="inferred from homology"/>
<feature type="chain" id="PRO_0000340825" description="Tetraacyldisaccharide 4'-kinase">
    <location>
        <begin position="1"/>
        <end position="355"/>
    </location>
</feature>
<feature type="region of interest" description="Disordered" evidence="2">
    <location>
        <begin position="206"/>
        <end position="226"/>
    </location>
</feature>
<feature type="compositionally biased region" description="Low complexity" evidence="2">
    <location>
        <begin position="208"/>
        <end position="222"/>
    </location>
</feature>
<feature type="binding site" evidence="1">
    <location>
        <begin position="64"/>
        <end position="71"/>
    </location>
    <ligand>
        <name>ATP</name>
        <dbReference type="ChEBI" id="CHEBI:30616"/>
    </ligand>
</feature>
<comment type="function">
    <text evidence="1">Transfers the gamma-phosphate of ATP to the 4'-position of a tetraacyldisaccharide 1-phosphate intermediate (termed DS-1-P) to form tetraacyldisaccharide 1,4'-bis-phosphate (lipid IVA).</text>
</comment>
<comment type="catalytic activity">
    <reaction evidence="1">
        <text>a lipid A disaccharide + ATP = a lipid IVA + ADP + H(+)</text>
        <dbReference type="Rhea" id="RHEA:67840"/>
        <dbReference type="ChEBI" id="CHEBI:15378"/>
        <dbReference type="ChEBI" id="CHEBI:30616"/>
        <dbReference type="ChEBI" id="CHEBI:176343"/>
        <dbReference type="ChEBI" id="CHEBI:176425"/>
        <dbReference type="ChEBI" id="CHEBI:456216"/>
        <dbReference type="EC" id="2.7.1.130"/>
    </reaction>
</comment>
<comment type="pathway">
    <text evidence="1">Glycolipid biosynthesis; lipid IV(A) biosynthesis; lipid IV(A) from (3R)-3-hydroxytetradecanoyl-[acyl-carrier-protein] and UDP-N-acetyl-alpha-D-glucosamine: step 6/6.</text>
</comment>
<comment type="similarity">
    <text evidence="1">Belongs to the LpxK family.</text>
</comment>
<sequence>MKPSSSRASFAQRHWQHDGWLATLLRPLSALTAWHVARRRAQYQTGRRPVYRAPVPVMVIGNIYVGGTGKTPVVIATVQALRERGWTPGVISRGYGARIGPQPRVGQGRELTPASHGDEPALIAHATGAPVAVHPRRALAAQALLSQYPQVDVIVSDDGLQHLAIARDIEIAVQDDRGIGNGRLLPAGPLREPAARLDTVDAIITNRAPQSSATPTAASGQGPRRADMRLEPEAARHLQSGARRPLADFADARAFPAVAAAAGIGNPERYFATLRAAGLHPEPCLALPDHYDYRRSPFEAIVADAILVTSKDAIKCRGLDDPRLWEVPVQARLSDPGLFDWLEARLRQAAAAIAR</sequence>
<name>LPXK_BORPD</name>
<organism>
    <name type="scientific">Bordetella petrii (strain ATCC BAA-461 / DSM 12804 / CCUG 43448)</name>
    <dbReference type="NCBI Taxonomy" id="340100"/>
    <lineage>
        <taxon>Bacteria</taxon>
        <taxon>Pseudomonadati</taxon>
        <taxon>Pseudomonadota</taxon>
        <taxon>Betaproteobacteria</taxon>
        <taxon>Burkholderiales</taxon>
        <taxon>Alcaligenaceae</taxon>
        <taxon>Bordetella</taxon>
    </lineage>
</organism>
<dbReference type="EC" id="2.7.1.130" evidence="1"/>
<dbReference type="EMBL" id="AM902716">
    <property type="protein sequence ID" value="CAP43012.1"/>
    <property type="molecule type" value="Genomic_DNA"/>
</dbReference>
<dbReference type="SMR" id="A9IQ28"/>
<dbReference type="STRING" id="94624.Bpet2670"/>
<dbReference type="KEGG" id="bpt:Bpet2670"/>
<dbReference type="eggNOG" id="COG1663">
    <property type="taxonomic scope" value="Bacteria"/>
</dbReference>
<dbReference type="UniPathway" id="UPA00359">
    <property type="reaction ID" value="UER00482"/>
</dbReference>
<dbReference type="Proteomes" id="UP000001225">
    <property type="component" value="Chromosome"/>
</dbReference>
<dbReference type="GO" id="GO:0005886">
    <property type="term" value="C:plasma membrane"/>
    <property type="evidence" value="ECO:0007669"/>
    <property type="project" value="TreeGrafter"/>
</dbReference>
<dbReference type="GO" id="GO:0005524">
    <property type="term" value="F:ATP binding"/>
    <property type="evidence" value="ECO:0007669"/>
    <property type="project" value="UniProtKB-UniRule"/>
</dbReference>
<dbReference type="GO" id="GO:0009029">
    <property type="term" value="F:tetraacyldisaccharide 4'-kinase activity"/>
    <property type="evidence" value="ECO:0007669"/>
    <property type="project" value="UniProtKB-UniRule"/>
</dbReference>
<dbReference type="GO" id="GO:0009245">
    <property type="term" value="P:lipid A biosynthetic process"/>
    <property type="evidence" value="ECO:0007669"/>
    <property type="project" value="UniProtKB-UniRule"/>
</dbReference>
<dbReference type="GO" id="GO:0009244">
    <property type="term" value="P:lipopolysaccharide core region biosynthetic process"/>
    <property type="evidence" value="ECO:0007669"/>
    <property type="project" value="TreeGrafter"/>
</dbReference>
<dbReference type="HAMAP" id="MF_00409">
    <property type="entry name" value="LpxK"/>
    <property type="match status" value="1"/>
</dbReference>
<dbReference type="InterPro" id="IPR003758">
    <property type="entry name" value="LpxK"/>
</dbReference>
<dbReference type="InterPro" id="IPR027417">
    <property type="entry name" value="P-loop_NTPase"/>
</dbReference>
<dbReference type="NCBIfam" id="TIGR00682">
    <property type="entry name" value="lpxK"/>
    <property type="match status" value="1"/>
</dbReference>
<dbReference type="PANTHER" id="PTHR42724">
    <property type="entry name" value="TETRAACYLDISACCHARIDE 4'-KINASE"/>
    <property type="match status" value="1"/>
</dbReference>
<dbReference type="PANTHER" id="PTHR42724:SF1">
    <property type="entry name" value="TETRAACYLDISACCHARIDE 4'-KINASE, MITOCHONDRIAL-RELATED"/>
    <property type="match status" value="1"/>
</dbReference>
<dbReference type="Pfam" id="PF02606">
    <property type="entry name" value="LpxK"/>
    <property type="match status" value="1"/>
</dbReference>
<dbReference type="SUPFAM" id="SSF52540">
    <property type="entry name" value="P-loop containing nucleoside triphosphate hydrolases"/>
    <property type="match status" value="1"/>
</dbReference>
<protein>
    <recommendedName>
        <fullName evidence="1">Tetraacyldisaccharide 4'-kinase</fullName>
        <ecNumber evidence="1">2.7.1.130</ecNumber>
    </recommendedName>
    <alternativeName>
        <fullName evidence="1">Lipid A 4'-kinase</fullName>
    </alternativeName>
</protein>